<protein>
    <recommendedName>
        <fullName>Centrosomal protein of 162 kDa</fullName>
        <shortName>Cep162</shortName>
    </recommendedName>
    <alternativeName>
        <fullName>Protein QN1 homolog</fullName>
    </alternativeName>
</protein>
<proteinExistence type="evidence at protein level"/>
<sequence>MAHYFKVDLDEEFERFMKELSDDSFENSNKTPRQPNEDNKEMKKKDPVPWWIAEDDFEDDGLLGTNVSYLKTKKTYQPVMDTEEESAEKVQFLKSSGTSILSVDSLEANELVVSEPHHSTLGLGLDTLEEQEEKEQFFARLEKGLTSSIDYSKLNQELDSDDSAQLKALHRYPRNTEPAEDGCENESEQEELPETYSDDFEDAEDADDPLITKDEETHPKENSESGKDSFPKQEEEKTGMLANVVLLDSFDSVEDVGLSSQEKATPKAKAPPEITDDGPAETGVPYGQSSGDTEALHQAYCHVAHSLGDTGEPRIEASTVQTVRSSIKDGLQENEESSKNVSTTESDLPTVEELMQPIRIDSYGIRAFDLQPISLKKATDSKEAESVGSLPLKTNTNTVSQDTRHAIQFPHKHDESVVLHRTADEGMGSSCPATEEHLDKMYLEILKKKTSVNPSLLPQDDKMNQTSRSQLGAGEEVPVIGKQVPCKKARSTPSLPKRKPQSGLYASARSSGYGKPSSPLQLFSALEKKTSKDNTKTKSVRSIPTSNQFRKREILSGTKLIKPAASNKPSPHREGSPATPKRPEDPSDDSFVQLQTEPLGSYGGNREKELLMLKRAQDAEEKWTGAQALMEQMKMTFCEKEKELENTVESLKRQQERELFRLNQENYILQAKLSSFEETSRKQRWLQFGETSDPLTGEKLKQIQKEIQEQETLLQGYQQENERLYNQVKDLQEQNKKNEERMFKENQNLFSELASLKEQMHKNHFLSQAVENTEPTKNQSFTDLLAELRAAQKEKNHLMEDIKRLKQDKQALEVDLEKVKRERDQAKDQIAYATGEKLYEIKILEETHKQEVSRLQKRLQWYAENQELLDRDAARLREANEETEKLRLEIEKLKTESGSPATQQRLRSKERALDAKRIQDLERQVKEMEGILKRRYPNSLPALILAASAAGDSVDRNTVEFMERRIKKLEADLEGKDEEAKKSLRTMEQQFQKMKIQYEQRLEEQEQLLAHRQKEAPQSQRNSSSRLKALETELGDIKEAHQITVRKLEAEIDVLKHQNADLEHKKNDKGDQGLQSIEFQVEQAQARAKLARLNEELAAKGREIQDLTKTVERLQKERRMMLSRQIPRSREETAAKRLKKDPNRGHGNAFPETLDGKLYHPHTFTDSHISEVLEENYRLRSELEGLILERSKLKMESEAAVCQLENSMKRVKDDAAAHIASLKASHEREIEKLLCQNAIENSSSKVAELNRKIATQEVLLKHFQGQVNELQGKQESLAVSQVREEILQKQITKLLEELKEAKENHTPEMKHFMGLERKIKQMEMRHRQREQELQQIIQQTRQVVETEQNKEVEKWKRLAQLKNRELDKFRTELDSILDVLRELHRQGVVVPMALAGEENTAEF</sequence>
<name>CE162_MOUSE</name>
<accession>Q6ZQ06</accession>
<accession>B9EKN3</accession>
<accession>Q6P262</accession>
<gene>
    <name type="primary">Cep162</name>
    <name type="synonym">Kiaa1009</name>
    <name type="synonym">Qn1</name>
</gene>
<keyword id="KW-0970">Cilium biogenesis/degradation</keyword>
<keyword id="KW-0175">Coiled coil</keyword>
<keyword id="KW-0963">Cytoplasm</keyword>
<keyword id="KW-0206">Cytoskeleton</keyword>
<keyword id="KW-0903">Direct protein sequencing</keyword>
<keyword id="KW-0493">Microtubule</keyword>
<keyword id="KW-0539">Nucleus</keyword>
<keyword id="KW-0597">Phosphoprotein</keyword>
<keyword id="KW-1185">Reference proteome</keyword>
<evidence type="ECO:0000250" key="1"/>
<evidence type="ECO:0000250" key="2">
    <source>
        <dbReference type="UniProtKB" id="Q4KLH6"/>
    </source>
</evidence>
<evidence type="ECO:0000250" key="3">
    <source>
        <dbReference type="UniProtKB" id="Q5TB80"/>
    </source>
</evidence>
<evidence type="ECO:0000255" key="4"/>
<evidence type="ECO:0000256" key="5">
    <source>
        <dbReference type="SAM" id="MobiDB-lite"/>
    </source>
</evidence>
<evidence type="ECO:0000269" key="6">
    <source>
    </source>
</evidence>
<evidence type="ECO:0000305" key="7"/>
<evidence type="ECO:0007744" key="8">
    <source>
    </source>
</evidence>
<comment type="function">
    <text evidence="1">Required to promote assembly of the transition zone in primary cilia. Acts by specifically recognizing and binding the axonemal microtubule. Localizes to the distal ends of centrioles before ciliogenesis and directly binds to axonemal microtubule, thereby promoting and restricting transition zone formation specifically at the cilia base. Required to mediate CEP290 association with microtubules (By similarity).</text>
</comment>
<comment type="subunit">
    <text evidence="2 3 6">Interacts with CPNE4 (PubMed:12522145). Interacts with alpha-tubulin. Interacts with CEP290 (By similarity).</text>
</comment>
<comment type="subcellular location">
    <subcellularLocation>
        <location evidence="1">Cytoplasm</location>
        <location evidence="1">Cytoskeleton</location>
        <location evidence="1">Microtubule organizing center</location>
        <location evidence="1">Centrosome</location>
        <location evidence="1">Centriole</location>
    </subcellularLocation>
    <subcellularLocation>
        <location evidence="1">Cytoplasm</location>
        <location evidence="1">Cytoskeleton</location>
        <location evidence="1">Spindle</location>
    </subcellularLocation>
    <subcellularLocation>
        <location evidence="1">Nucleus</location>
    </subcellularLocation>
    <text evidence="1">Localizes to the distal end of centrioles throughout the cell cycle. During ciliogenesis, found at the cilia base. Localizes to spindle microtubules during mitosis (By similarity).</text>
</comment>
<comment type="similarity">
    <text evidence="7">Belongs to the CEP162 family.</text>
</comment>
<dbReference type="EMBL" id="AC125370">
    <property type="status" value="NOT_ANNOTATED_CDS"/>
    <property type="molecule type" value="Genomic_DNA"/>
</dbReference>
<dbReference type="EMBL" id="BC150998">
    <property type="protein sequence ID" value="AAI50999.1"/>
    <property type="molecule type" value="mRNA"/>
</dbReference>
<dbReference type="EMBL" id="BC151006">
    <property type="protein sequence ID" value="AAI51007.1"/>
    <property type="molecule type" value="mRNA"/>
</dbReference>
<dbReference type="EMBL" id="AK129260">
    <property type="protein sequence ID" value="BAC98070.1"/>
    <property type="molecule type" value="mRNA"/>
</dbReference>
<dbReference type="CCDS" id="CCDS52879.1"/>
<dbReference type="RefSeq" id="NP_955020.2">
    <property type="nucleotide sequence ID" value="NM_199316.2"/>
</dbReference>
<dbReference type="SMR" id="Q6ZQ06"/>
<dbReference type="BioGRID" id="238234">
    <property type="interactions" value="6"/>
</dbReference>
<dbReference type="FunCoup" id="Q6ZQ06">
    <property type="interactions" value="2214"/>
</dbReference>
<dbReference type="STRING" id="10090.ENSMUSP00000091319"/>
<dbReference type="iPTMnet" id="Q6ZQ06"/>
<dbReference type="PhosphoSitePlus" id="Q6ZQ06"/>
<dbReference type="jPOST" id="Q6ZQ06"/>
<dbReference type="PaxDb" id="10090-ENSMUSP00000091319"/>
<dbReference type="ProteomicsDB" id="281160"/>
<dbReference type="Antibodypedia" id="31712">
    <property type="antibodies" value="32 antibodies from 7 providers"/>
</dbReference>
<dbReference type="Ensembl" id="ENSMUST00000093802.6">
    <property type="protein sequence ID" value="ENSMUSP00000091319.5"/>
    <property type="gene ID" value="ENSMUSG00000056919.10"/>
</dbReference>
<dbReference type="GeneID" id="382090"/>
<dbReference type="KEGG" id="mmu:382090"/>
<dbReference type="UCSC" id="uc009qyg.1">
    <property type="organism name" value="mouse"/>
</dbReference>
<dbReference type="AGR" id="MGI:1925343"/>
<dbReference type="CTD" id="22832"/>
<dbReference type="MGI" id="MGI:1925343">
    <property type="gene designation" value="Cep162"/>
</dbReference>
<dbReference type="VEuPathDB" id="HostDB:ENSMUSG00000056919"/>
<dbReference type="eggNOG" id="ENOG502QSPF">
    <property type="taxonomic scope" value="Eukaryota"/>
</dbReference>
<dbReference type="GeneTree" id="ENSGT00390000009631"/>
<dbReference type="HOGENOM" id="CLU_005179_0_0_1"/>
<dbReference type="InParanoid" id="Q6ZQ06"/>
<dbReference type="OMA" id="PDMTDNE"/>
<dbReference type="OrthoDB" id="2157184at2759"/>
<dbReference type="PhylomeDB" id="Q6ZQ06"/>
<dbReference type="TreeFam" id="TF330884"/>
<dbReference type="Reactome" id="R-MMU-5620912">
    <property type="pathway name" value="Anchoring of the basal body to the plasma membrane"/>
</dbReference>
<dbReference type="BioGRID-ORCS" id="382090">
    <property type="hits" value="4 hits in 76 CRISPR screens"/>
</dbReference>
<dbReference type="ChiTaRS" id="Cep162">
    <property type="organism name" value="mouse"/>
</dbReference>
<dbReference type="PRO" id="PR:Q6ZQ06"/>
<dbReference type="Proteomes" id="UP000000589">
    <property type="component" value="Chromosome 9"/>
</dbReference>
<dbReference type="RNAct" id="Q6ZQ06">
    <property type="molecule type" value="protein"/>
</dbReference>
<dbReference type="Bgee" id="ENSMUSG00000056919">
    <property type="expression patterns" value="Expressed in undifferentiated genital tubercle and 192 other cell types or tissues"/>
</dbReference>
<dbReference type="GO" id="GO:0005879">
    <property type="term" value="C:axonemal microtubule"/>
    <property type="evidence" value="ECO:0000250"/>
    <property type="project" value="UniProtKB"/>
</dbReference>
<dbReference type="GO" id="GO:0034451">
    <property type="term" value="C:centriolar satellite"/>
    <property type="evidence" value="ECO:0007669"/>
    <property type="project" value="Ensembl"/>
</dbReference>
<dbReference type="GO" id="GO:0005814">
    <property type="term" value="C:centriole"/>
    <property type="evidence" value="ECO:0000250"/>
    <property type="project" value="UniProtKB"/>
</dbReference>
<dbReference type="GO" id="GO:0036064">
    <property type="term" value="C:ciliary basal body"/>
    <property type="evidence" value="ECO:0007669"/>
    <property type="project" value="Ensembl"/>
</dbReference>
<dbReference type="GO" id="GO:0005829">
    <property type="term" value="C:cytosol"/>
    <property type="evidence" value="ECO:0007669"/>
    <property type="project" value="Ensembl"/>
</dbReference>
<dbReference type="GO" id="GO:0005794">
    <property type="term" value="C:Golgi apparatus"/>
    <property type="evidence" value="ECO:0007669"/>
    <property type="project" value="Ensembl"/>
</dbReference>
<dbReference type="GO" id="GO:0005654">
    <property type="term" value="C:nucleoplasm"/>
    <property type="evidence" value="ECO:0007669"/>
    <property type="project" value="Ensembl"/>
</dbReference>
<dbReference type="GO" id="GO:0005819">
    <property type="term" value="C:spindle"/>
    <property type="evidence" value="ECO:0007669"/>
    <property type="project" value="UniProtKB-SubCell"/>
</dbReference>
<dbReference type="GO" id="GO:0060271">
    <property type="term" value="P:cilium assembly"/>
    <property type="evidence" value="ECO:0000250"/>
    <property type="project" value="UniProtKB"/>
</dbReference>
<dbReference type="InterPro" id="IPR038774">
    <property type="entry name" value="CEP162-like"/>
</dbReference>
<dbReference type="PANTHER" id="PTHR34031">
    <property type="entry name" value="CENTROSOMAL PROTEIN OF 162 KDA"/>
    <property type="match status" value="1"/>
</dbReference>
<dbReference type="PANTHER" id="PTHR34031:SF1">
    <property type="entry name" value="CENTROSOMAL PROTEIN OF 162 KDA"/>
    <property type="match status" value="1"/>
</dbReference>
<reference key="1">
    <citation type="journal article" date="2009" name="PLoS Biol.">
        <title>Lineage-specific biology revealed by a finished genome assembly of the mouse.</title>
        <authorList>
            <person name="Church D.M."/>
            <person name="Goodstadt L."/>
            <person name="Hillier L.W."/>
            <person name="Zody M.C."/>
            <person name="Goldstein S."/>
            <person name="She X."/>
            <person name="Bult C.J."/>
            <person name="Agarwala R."/>
            <person name="Cherry J.L."/>
            <person name="DiCuccio M."/>
            <person name="Hlavina W."/>
            <person name="Kapustin Y."/>
            <person name="Meric P."/>
            <person name="Maglott D."/>
            <person name="Birtle Z."/>
            <person name="Marques A.C."/>
            <person name="Graves T."/>
            <person name="Zhou S."/>
            <person name="Teague B."/>
            <person name="Potamousis K."/>
            <person name="Churas C."/>
            <person name="Place M."/>
            <person name="Herschleb J."/>
            <person name="Runnheim R."/>
            <person name="Forrest D."/>
            <person name="Amos-Landgraf J."/>
            <person name="Schwartz D.C."/>
            <person name="Cheng Z."/>
            <person name="Lindblad-Toh K."/>
            <person name="Eichler E.E."/>
            <person name="Ponting C.P."/>
        </authorList>
    </citation>
    <scope>NUCLEOTIDE SEQUENCE [LARGE SCALE GENOMIC DNA]</scope>
    <source>
        <strain>C57BL/6J</strain>
    </source>
</reference>
<reference key="2">
    <citation type="journal article" date="2004" name="Genome Res.">
        <title>The status, quality, and expansion of the NIH full-length cDNA project: the Mammalian Gene Collection (MGC).</title>
        <authorList>
            <consortium name="The MGC Project Team"/>
        </authorList>
    </citation>
    <scope>NUCLEOTIDE SEQUENCE [LARGE SCALE MRNA]</scope>
</reference>
<reference key="3">
    <citation type="journal article" date="2003" name="DNA Res.">
        <title>Prediction of the coding sequences of mouse homologues of KIAA gene: III. The complete nucleotide sequences of 500 mouse KIAA-homologous cDNAs identified by screening of terminal sequences of cDNA clones randomly sampled from size-fractionated libraries.</title>
        <authorList>
            <person name="Okazaki N."/>
            <person name="Kikuno R."/>
            <person name="Ohara R."/>
            <person name="Inamoto S."/>
            <person name="Koseki H."/>
            <person name="Hiraoka S."/>
            <person name="Saga Y."/>
            <person name="Nagase T."/>
            <person name="Ohara O."/>
            <person name="Koga H."/>
        </authorList>
    </citation>
    <scope>NUCLEOTIDE SEQUENCE [LARGE SCALE MRNA] OF 114-733</scope>
    <source>
        <tissue>Embryonic tail</tissue>
    </source>
</reference>
<reference key="4">
    <citation type="submission" date="2009-01" db="UniProtKB">
        <authorList>
            <person name="Lubec G."/>
            <person name="Sunyer B."/>
            <person name="Chen W.-Q."/>
        </authorList>
    </citation>
    <scope>PROTEIN SEQUENCE OF 1119-1128</scope>
    <scope>IDENTIFICATION BY MASS SPECTROMETRY</scope>
    <source>
        <strain>OF1</strain>
        <tissue>Hippocampus</tissue>
    </source>
</reference>
<reference key="5">
    <citation type="journal article" date="2003" name="J. Biol. Chem.">
        <title>Identification of targets for calcium signaling through the copine family of proteins. Characterization of a coiled-coil copine-binding motif.</title>
        <authorList>
            <person name="Tomsig J.L."/>
            <person name="Snyder S.L."/>
            <person name="Creutz C.E."/>
        </authorList>
    </citation>
    <scope>INTERACTION WITH CPNE4</scope>
</reference>
<reference key="6">
    <citation type="journal article" date="2010" name="Cell">
        <title>A tissue-specific atlas of mouse protein phosphorylation and expression.</title>
        <authorList>
            <person name="Huttlin E.L."/>
            <person name="Jedrychowski M.P."/>
            <person name="Elias J.E."/>
            <person name="Goswami T."/>
            <person name="Rad R."/>
            <person name="Beausoleil S.A."/>
            <person name="Villen J."/>
            <person name="Haas W."/>
            <person name="Sowa M.E."/>
            <person name="Gygi S.P."/>
        </authorList>
    </citation>
    <scope>PHOSPHORYLATION [LARGE SCALE ANALYSIS] AT SER-160</scope>
    <scope>IDENTIFICATION BY MASS SPECTROMETRY [LARGE SCALE ANALYSIS]</scope>
    <source>
        <tissue>Kidney</tissue>
        <tissue>Lung</tissue>
        <tissue>Spleen</tissue>
        <tissue>Testis</tissue>
    </source>
</reference>
<feature type="chain" id="PRO_0000295629" description="Centrosomal protein of 162 kDa">
    <location>
        <begin position="1"/>
        <end position="1403"/>
    </location>
</feature>
<feature type="region of interest" description="Disordered" evidence="5">
    <location>
        <begin position="20"/>
        <end position="46"/>
    </location>
</feature>
<feature type="region of interest" description="Disordered" evidence="5">
    <location>
        <begin position="169"/>
        <end position="243"/>
    </location>
</feature>
<feature type="region of interest" description="Disordered" evidence="5">
    <location>
        <begin position="256"/>
        <end position="292"/>
    </location>
</feature>
<feature type="region of interest" description="Disordered" evidence="5">
    <location>
        <begin position="306"/>
        <end position="348"/>
    </location>
</feature>
<feature type="region of interest" description="Disordered" evidence="5">
    <location>
        <begin position="453"/>
        <end position="606"/>
    </location>
</feature>
<feature type="region of interest" description="Disordered" evidence="5">
    <location>
        <begin position="1126"/>
        <end position="1147"/>
    </location>
</feature>
<feature type="coiled-coil region" evidence="4">
    <location>
        <begin position="614"/>
        <end position="1124"/>
    </location>
</feature>
<feature type="coiled-coil region" evidence="4">
    <location>
        <begin position="1174"/>
        <end position="1386"/>
    </location>
</feature>
<feature type="compositionally biased region" description="Basic and acidic residues" evidence="5">
    <location>
        <begin position="35"/>
        <end position="46"/>
    </location>
</feature>
<feature type="compositionally biased region" description="Acidic residues" evidence="5">
    <location>
        <begin position="178"/>
        <end position="208"/>
    </location>
</feature>
<feature type="compositionally biased region" description="Basic and acidic residues" evidence="5">
    <location>
        <begin position="210"/>
        <end position="238"/>
    </location>
</feature>
<feature type="compositionally biased region" description="Basic residues" evidence="5">
    <location>
        <begin position="485"/>
        <end position="500"/>
    </location>
</feature>
<feature type="compositionally biased region" description="Basic and acidic residues" evidence="5">
    <location>
        <begin position="526"/>
        <end position="536"/>
    </location>
</feature>
<feature type="compositionally biased region" description="Basic and acidic residues" evidence="5">
    <location>
        <begin position="571"/>
        <end position="585"/>
    </location>
</feature>
<feature type="compositionally biased region" description="Basic and acidic residues" evidence="5">
    <location>
        <begin position="1128"/>
        <end position="1144"/>
    </location>
</feature>
<feature type="modified residue" description="Phosphoserine" evidence="8">
    <location>
        <position position="160"/>
    </location>
</feature>
<feature type="modified residue" description="Phosphoserine" evidence="2">
    <location>
        <position position="163"/>
    </location>
</feature>
<organism>
    <name type="scientific">Mus musculus</name>
    <name type="common">Mouse</name>
    <dbReference type="NCBI Taxonomy" id="10090"/>
    <lineage>
        <taxon>Eukaryota</taxon>
        <taxon>Metazoa</taxon>
        <taxon>Chordata</taxon>
        <taxon>Craniata</taxon>
        <taxon>Vertebrata</taxon>
        <taxon>Euteleostomi</taxon>
        <taxon>Mammalia</taxon>
        <taxon>Eutheria</taxon>
        <taxon>Euarchontoglires</taxon>
        <taxon>Glires</taxon>
        <taxon>Rodentia</taxon>
        <taxon>Myomorpha</taxon>
        <taxon>Muroidea</taxon>
        <taxon>Muridae</taxon>
        <taxon>Murinae</taxon>
        <taxon>Mus</taxon>
        <taxon>Mus</taxon>
    </lineage>
</organism>